<evidence type="ECO:0000255" key="1">
    <source>
        <dbReference type="HAMAP-Rule" id="MF_00140"/>
    </source>
</evidence>
<reference key="1">
    <citation type="journal article" date="2000" name="Nucleic Acids Res.">
        <title>Complete genome sequence of the alkaliphilic bacterium Bacillus halodurans and genomic sequence comparison with Bacillus subtilis.</title>
        <authorList>
            <person name="Takami H."/>
            <person name="Nakasone K."/>
            <person name="Takaki Y."/>
            <person name="Maeno G."/>
            <person name="Sasaki R."/>
            <person name="Masui N."/>
            <person name="Fuji F."/>
            <person name="Hirama C."/>
            <person name="Nakamura Y."/>
            <person name="Ogasawara N."/>
            <person name="Kuhara S."/>
            <person name="Horikoshi K."/>
        </authorList>
    </citation>
    <scope>NUCLEOTIDE SEQUENCE [LARGE SCALE GENOMIC DNA]</scope>
    <source>
        <strain>ATCC BAA-125 / DSM 18197 / FERM 7344 / JCM 9153 / C-125</strain>
    </source>
</reference>
<keyword id="KW-0030">Aminoacyl-tRNA synthetase</keyword>
<keyword id="KW-0067">ATP-binding</keyword>
<keyword id="KW-0963">Cytoplasm</keyword>
<keyword id="KW-0436">Ligase</keyword>
<keyword id="KW-0547">Nucleotide-binding</keyword>
<keyword id="KW-0648">Protein biosynthesis</keyword>
<keyword id="KW-1185">Reference proteome</keyword>
<feature type="chain" id="PRO_0000136600" description="Tryptophan--tRNA ligase">
    <location>
        <begin position="1"/>
        <end position="330"/>
    </location>
</feature>
<feature type="short sequence motif" description="'HIGH' region" evidence="1">
    <location>
        <begin position="11"/>
        <end position="19"/>
    </location>
</feature>
<feature type="short sequence motif" description="'KMSKS' region" evidence="1">
    <location>
        <begin position="193"/>
        <end position="197"/>
    </location>
</feature>
<feature type="binding site" evidence="1">
    <location>
        <begin position="10"/>
        <end position="12"/>
    </location>
    <ligand>
        <name>ATP</name>
        <dbReference type="ChEBI" id="CHEBI:30616"/>
    </ligand>
</feature>
<feature type="binding site" evidence="1">
    <location>
        <begin position="18"/>
        <end position="19"/>
    </location>
    <ligand>
        <name>ATP</name>
        <dbReference type="ChEBI" id="CHEBI:30616"/>
    </ligand>
</feature>
<feature type="binding site" evidence="1">
    <location>
        <position position="133"/>
    </location>
    <ligand>
        <name>L-tryptophan</name>
        <dbReference type="ChEBI" id="CHEBI:57912"/>
    </ligand>
</feature>
<feature type="binding site" evidence="1">
    <location>
        <begin position="145"/>
        <end position="147"/>
    </location>
    <ligand>
        <name>ATP</name>
        <dbReference type="ChEBI" id="CHEBI:30616"/>
    </ligand>
</feature>
<feature type="binding site" evidence="1">
    <location>
        <position position="184"/>
    </location>
    <ligand>
        <name>ATP</name>
        <dbReference type="ChEBI" id="CHEBI:30616"/>
    </ligand>
</feature>
<feature type="binding site" evidence="1">
    <location>
        <begin position="193"/>
        <end position="197"/>
    </location>
    <ligand>
        <name>ATP</name>
        <dbReference type="ChEBI" id="CHEBI:30616"/>
    </ligand>
</feature>
<dbReference type="EC" id="6.1.1.2" evidence="1"/>
<dbReference type="EMBL" id="BA000004">
    <property type="protein sequence ID" value="BAB06589.1"/>
    <property type="molecule type" value="Genomic_DNA"/>
</dbReference>
<dbReference type="PIR" id="F84008">
    <property type="entry name" value="F84008"/>
</dbReference>
<dbReference type="RefSeq" id="WP_010899017.1">
    <property type="nucleotide sequence ID" value="NC_002570.2"/>
</dbReference>
<dbReference type="SMR" id="Q9K8Y2"/>
<dbReference type="STRING" id="272558.gene:10728780"/>
<dbReference type="GeneID" id="87598398"/>
<dbReference type="KEGG" id="bha:BH2870"/>
<dbReference type="eggNOG" id="COG0180">
    <property type="taxonomic scope" value="Bacteria"/>
</dbReference>
<dbReference type="HOGENOM" id="CLU_029244_1_1_9"/>
<dbReference type="OrthoDB" id="9801042at2"/>
<dbReference type="Proteomes" id="UP000001258">
    <property type="component" value="Chromosome"/>
</dbReference>
<dbReference type="GO" id="GO:0005829">
    <property type="term" value="C:cytosol"/>
    <property type="evidence" value="ECO:0007669"/>
    <property type="project" value="TreeGrafter"/>
</dbReference>
<dbReference type="GO" id="GO:0005524">
    <property type="term" value="F:ATP binding"/>
    <property type="evidence" value="ECO:0007669"/>
    <property type="project" value="UniProtKB-UniRule"/>
</dbReference>
<dbReference type="GO" id="GO:0004830">
    <property type="term" value="F:tryptophan-tRNA ligase activity"/>
    <property type="evidence" value="ECO:0007669"/>
    <property type="project" value="UniProtKB-UniRule"/>
</dbReference>
<dbReference type="GO" id="GO:0006436">
    <property type="term" value="P:tryptophanyl-tRNA aminoacylation"/>
    <property type="evidence" value="ECO:0007669"/>
    <property type="project" value="UniProtKB-UniRule"/>
</dbReference>
<dbReference type="CDD" id="cd00806">
    <property type="entry name" value="TrpRS_core"/>
    <property type="match status" value="1"/>
</dbReference>
<dbReference type="FunFam" id="1.10.240.10:FF:000002">
    <property type="entry name" value="Tryptophan--tRNA ligase"/>
    <property type="match status" value="1"/>
</dbReference>
<dbReference type="Gene3D" id="3.40.50.620">
    <property type="entry name" value="HUPs"/>
    <property type="match status" value="1"/>
</dbReference>
<dbReference type="Gene3D" id="1.10.240.10">
    <property type="entry name" value="Tyrosyl-Transfer RNA Synthetase"/>
    <property type="match status" value="1"/>
</dbReference>
<dbReference type="HAMAP" id="MF_00140_B">
    <property type="entry name" value="Trp_tRNA_synth_B"/>
    <property type="match status" value="1"/>
</dbReference>
<dbReference type="InterPro" id="IPR001412">
    <property type="entry name" value="aa-tRNA-synth_I_CS"/>
</dbReference>
<dbReference type="InterPro" id="IPR002305">
    <property type="entry name" value="aa-tRNA-synth_Ic"/>
</dbReference>
<dbReference type="InterPro" id="IPR014729">
    <property type="entry name" value="Rossmann-like_a/b/a_fold"/>
</dbReference>
<dbReference type="InterPro" id="IPR002306">
    <property type="entry name" value="Trp-tRNA-ligase"/>
</dbReference>
<dbReference type="InterPro" id="IPR024109">
    <property type="entry name" value="Trp-tRNA-ligase_bac-type"/>
</dbReference>
<dbReference type="InterPro" id="IPR050203">
    <property type="entry name" value="Trp-tRNA_synthetase"/>
</dbReference>
<dbReference type="NCBIfam" id="TIGR00233">
    <property type="entry name" value="trpS"/>
    <property type="match status" value="1"/>
</dbReference>
<dbReference type="PANTHER" id="PTHR43766">
    <property type="entry name" value="TRYPTOPHAN--TRNA LIGASE, MITOCHONDRIAL"/>
    <property type="match status" value="1"/>
</dbReference>
<dbReference type="PANTHER" id="PTHR43766:SF1">
    <property type="entry name" value="TRYPTOPHAN--TRNA LIGASE, MITOCHONDRIAL"/>
    <property type="match status" value="1"/>
</dbReference>
<dbReference type="Pfam" id="PF00579">
    <property type="entry name" value="tRNA-synt_1b"/>
    <property type="match status" value="1"/>
</dbReference>
<dbReference type="PRINTS" id="PR01039">
    <property type="entry name" value="TRNASYNTHTRP"/>
</dbReference>
<dbReference type="SUPFAM" id="SSF52374">
    <property type="entry name" value="Nucleotidylyl transferase"/>
    <property type="match status" value="1"/>
</dbReference>
<dbReference type="PROSITE" id="PS00178">
    <property type="entry name" value="AA_TRNA_LIGASE_I"/>
    <property type="match status" value="1"/>
</dbReference>
<accession>Q9K8Y2</accession>
<name>SYW_HALH5</name>
<protein>
    <recommendedName>
        <fullName evidence="1">Tryptophan--tRNA ligase</fullName>
        <ecNumber evidence="1">6.1.1.2</ecNumber>
    </recommendedName>
    <alternativeName>
        <fullName evidence="1">Tryptophanyl-tRNA synthetase</fullName>
        <shortName evidence="1">TrpRS</shortName>
    </alternativeName>
</protein>
<comment type="function">
    <text evidence="1">Catalyzes the attachment of tryptophan to tRNA(Trp).</text>
</comment>
<comment type="catalytic activity">
    <reaction evidence="1">
        <text>tRNA(Trp) + L-tryptophan + ATP = L-tryptophyl-tRNA(Trp) + AMP + diphosphate + H(+)</text>
        <dbReference type="Rhea" id="RHEA:24080"/>
        <dbReference type="Rhea" id="RHEA-COMP:9671"/>
        <dbReference type="Rhea" id="RHEA-COMP:9705"/>
        <dbReference type="ChEBI" id="CHEBI:15378"/>
        <dbReference type="ChEBI" id="CHEBI:30616"/>
        <dbReference type="ChEBI" id="CHEBI:33019"/>
        <dbReference type="ChEBI" id="CHEBI:57912"/>
        <dbReference type="ChEBI" id="CHEBI:78442"/>
        <dbReference type="ChEBI" id="CHEBI:78535"/>
        <dbReference type="ChEBI" id="CHEBI:456215"/>
        <dbReference type="EC" id="6.1.1.2"/>
    </reaction>
</comment>
<comment type="subunit">
    <text evidence="1">Homodimer.</text>
</comment>
<comment type="subcellular location">
    <subcellularLocation>
        <location evidence="1">Cytoplasm</location>
    </subcellularLocation>
</comment>
<comment type="similarity">
    <text evidence="1">Belongs to the class-I aminoacyl-tRNA synthetase family.</text>
</comment>
<proteinExistence type="inferred from homology"/>
<gene>
    <name evidence="1" type="primary">trpS</name>
    <name type="ordered locus">BH2870</name>
</gene>
<organism>
    <name type="scientific">Halalkalibacterium halodurans (strain ATCC BAA-125 / DSM 18197 / FERM 7344 / JCM 9153 / C-125)</name>
    <name type="common">Bacillus halodurans</name>
    <dbReference type="NCBI Taxonomy" id="272558"/>
    <lineage>
        <taxon>Bacteria</taxon>
        <taxon>Bacillati</taxon>
        <taxon>Bacillota</taxon>
        <taxon>Bacilli</taxon>
        <taxon>Bacillales</taxon>
        <taxon>Bacillaceae</taxon>
        <taxon>Halalkalibacterium (ex Joshi et al. 2022)</taxon>
    </lineage>
</organism>
<sequence length="330" mass="37066">MKKTVFSGIQPSGTLTLGNYLGAMKHFVSLQEDYNCYFCIVDQHAITVPQDRLKLRENIRSLAALYLAVGIDPSKATLFIQSEVPAHAQLGWMMQCVSYIGELERMTQFKDKSDGKEAVSASLLTYPPLMAADILLYHTNIVPVGEDQKQHLELTRDLAERFNKKYNDIFTIPEVQIPKVGARIMSLNDPSKKMSKSNPNPKSYISMLDDEKTITKKIKSAVTDSDGIVKFDKENKPAISNLLSIYSLCKGASIEEVEAQFVGKGYGEFKESLAQVVVDTLKPIQERYEQLIQSEELDHILDQGADKANRVARKTLEKAERAMGLGRKRR</sequence>